<protein>
    <recommendedName>
        <fullName evidence="1">Armadillo-like helical domain-containing protein 3</fullName>
    </recommendedName>
</protein>
<proteinExistence type="evidence at transcript level"/>
<sequence>MAQTEKKAGLLRRTSSSKKPLKEKVVLMYDEIFMKEDPTKNSPRFWDELFLMKVNLEYLEGKLESLDGDEFMKIKDNINSLFHHCVQALAEEHQIKVVNALQTLCALFRGVHQKNKSATGFDIINMLIGFDKAELRMKELMESLDSLLCGDGSESLKSLCLKLLLCLVTVTDNISQNTILEYVMINSIFEAILQILSDVSSRSQHGYDSVVLLALLVNYRKYESVNPYIVKLSIVDDEPTLDGLGMVIHHALTEYNRQYKEKEEENQGGFFSTLSSMVGSMFIADADEKLSVQTNEAILLALYEAVHLNRNFITVLAQSHPEIDMAATPATPVPASPTTPLGTTPPSLDLMNNPELPLDPNLQTSNLLITFLKYSSIVMQDTKDEHRLNSARLCLIILTCIAEDQYADAFLHDDNMNFRVNLHRMPMRHRKKAADKNIPCRPLVCAVLDLMVEFVVTHMMKEFPMDLYVRCVQIIHKLICYQKKCRVRLHYTWRELWSALINLLKFLLSNETGLLAKHNIFQLALQVVNLFNMFITYGDTFLPTPSSYDELYYEIIRMHQVFDNLYCMVLRVSTNAGQWKEPASKVTHALVNVRAIINHFNPKIESYAAVNHISQLSEDQVLEVVRSNYDTLTLKLQDGLDQFERYSEQPREAGFFKELVRSISLNVRKNVSLTTMSQDVLLKEFSSIS</sequence>
<organism>
    <name type="scientific">Danio rerio</name>
    <name type="common">Zebrafish</name>
    <name type="synonym">Brachydanio rerio</name>
    <dbReference type="NCBI Taxonomy" id="7955"/>
    <lineage>
        <taxon>Eukaryota</taxon>
        <taxon>Metazoa</taxon>
        <taxon>Chordata</taxon>
        <taxon>Craniata</taxon>
        <taxon>Vertebrata</taxon>
        <taxon>Euteleostomi</taxon>
        <taxon>Actinopterygii</taxon>
        <taxon>Neopterygii</taxon>
        <taxon>Teleostei</taxon>
        <taxon>Ostariophysi</taxon>
        <taxon>Cypriniformes</taxon>
        <taxon>Danionidae</taxon>
        <taxon>Danioninae</taxon>
        <taxon>Danio</taxon>
    </lineage>
</organism>
<comment type="function">
    <text evidence="1">May be involved in Golgi maintenance and protein secretion.</text>
</comment>
<comment type="subcellular location">
    <subcellularLocation>
        <location evidence="1">Golgi apparatus membrane</location>
        <topology evidence="2">Single-pass membrane protein</topology>
    </subcellularLocation>
    <subcellularLocation>
        <location evidence="1">Cytoplasm</location>
    </subcellularLocation>
</comment>
<comment type="similarity">
    <text evidence="3">Belongs to the ARMH3 family.</text>
</comment>
<comment type="sequence caution" evidence="3">
    <conflict type="erroneous initiation">
        <sequence resource="EMBL-CDS" id="AAH56810"/>
    </conflict>
    <text>Truncated N-terminus.</text>
</comment>
<name>ARMD3_DANRE</name>
<accession>Q6PGW3</accession>
<gene>
    <name evidence="1" type="primary">armh3</name>
    <name type="ORF">zgc:63733</name>
</gene>
<dbReference type="EMBL" id="BC056810">
    <property type="protein sequence ID" value="AAH56810.1"/>
    <property type="status" value="ALT_INIT"/>
    <property type="molecule type" value="mRNA"/>
</dbReference>
<dbReference type="RefSeq" id="NP_956913.2">
    <property type="nucleotide sequence ID" value="NM_200619.2"/>
</dbReference>
<dbReference type="FunCoup" id="Q6PGW3">
    <property type="interactions" value="1247"/>
</dbReference>
<dbReference type="STRING" id="7955.ENSDARP00000140852"/>
<dbReference type="PaxDb" id="7955-ENSDARP00000103797"/>
<dbReference type="Ensembl" id="ENSDART00000162211">
    <property type="protein sequence ID" value="ENSDARP00000140852"/>
    <property type="gene ID" value="ENSDARG00000104285"/>
</dbReference>
<dbReference type="GeneID" id="393591"/>
<dbReference type="KEGG" id="dre:393591"/>
<dbReference type="AGR" id="ZFIN:ZDB-GENE-040426-1249"/>
<dbReference type="CTD" id="79591"/>
<dbReference type="ZFIN" id="ZDB-GENE-040426-1249">
    <property type="gene designation" value="armh3"/>
</dbReference>
<dbReference type="eggNOG" id="KOG4654">
    <property type="taxonomic scope" value="Eukaryota"/>
</dbReference>
<dbReference type="HOGENOM" id="CLU_029861_2_0_1"/>
<dbReference type="InParanoid" id="Q6PGW3"/>
<dbReference type="OMA" id="YEATHLN"/>
<dbReference type="OrthoDB" id="2012278at2759"/>
<dbReference type="PhylomeDB" id="Q6PGW3"/>
<dbReference type="TreeFam" id="TF300220"/>
<dbReference type="PRO" id="PR:Q6PGW3"/>
<dbReference type="Proteomes" id="UP000000437">
    <property type="component" value="Chromosome 22"/>
</dbReference>
<dbReference type="Bgee" id="ENSDARG00000104285">
    <property type="expression patterns" value="Expressed in blastula and 21 other cell types or tissues"/>
</dbReference>
<dbReference type="GO" id="GO:0005829">
    <property type="term" value="C:cytosol"/>
    <property type="evidence" value="ECO:0000250"/>
    <property type="project" value="UniProtKB"/>
</dbReference>
<dbReference type="GO" id="GO:0000139">
    <property type="term" value="C:Golgi membrane"/>
    <property type="evidence" value="ECO:0000250"/>
    <property type="project" value="UniProtKB"/>
</dbReference>
<dbReference type="GO" id="GO:1903358">
    <property type="term" value="P:regulation of Golgi organization"/>
    <property type="evidence" value="ECO:0000250"/>
    <property type="project" value="UniProtKB"/>
</dbReference>
<dbReference type="InterPro" id="IPR016024">
    <property type="entry name" value="ARM-type_fold"/>
</dbReference>
<dbReference type="InterPro" id="IPR039868">
    <property type="entry name" value="ARMD3-like"/>
</dbReference>
<dbReference type="InterPro" id="IPR013636">
    <property type="entry name" value="ARMH3_C"/>
</dbReference>
<dbReference type="PANTHER" id="PTHR13608">
    <property type="entry name" value="ARMADILLO-LIKE HELICAL DOMAIN-CONTAINING PROTEIN 3"/>
    <property type="match status" value="1"/>
</dbReference>
<dbReference type="PANTHER" id="PTHR13608:SF3">
    <property type="entry name" value="ARMADILLO-LIKE HELICAL DOMAIN-CONTAINING PROTEIN 3"/>
    <property type="match status" value="1"/>
</dbReference>
<dbReference type="Pfam" id="PF08427">
    <property type="entry name" value="ARMH3_C"/>
    <property type="match status" value="1"/>
</dbReference>
<dbReference type="SMART" id="SM01158">
    <property type="entry name" value="DUF1741"/>
    <property type="match status" value="1"/>
</dbReference>
<dbReference type="SUPFAM" id="SSF48371">
    <property type="entry name" value="ARM repeat"/>
    <property type="match status" value="1"/>
</dbReference>
<keyword id="KW-0963">Cytoplasm</keyword>
<keyword id="KW-0333">Golgi apparatus</keyword>
<keyword id="KW-0472">Membrane</keyword>
<keyword id="KW-1185">Reference proteome</keyword>
<keyword id="KW-0812">Transmembrane</keyword>
<keyword id="KW-1133">Transmembrane helix</keyword>
<feature type="chain" id="PRO_0000284517" description="Armadillo-like helical domain-containing protein 3">
    <location>
        <begin position="1"/>
        <end position="689"/>
    </location>
</feature>
<feature type="transmembrane region" description="Helical" evidence="2">
    <location>
        <begin position="520"/>
        <end position="538"/>
    </location>
</feature>
<evidence type="ECO:0000250" key="1">
    <source>
        <dbReference type="UniProtKB" id="Q5T2E6"/>
    </source>
</evidence>
<evidence type="ECO:0000255" key="2"/>
<evidence type="ECO:0000305" key="3"/>
<reference key="1">
    <citation type="submission" date="2003-08" db="EMBL/GenBank/DDBJ databases">
        <authorList>
            <consortium name="NIH - Zebrafish Gene Collection (ZGC) project"/>
        </authorList>
    </citation>
    <scope>NUCLEOTIDE SEQUENCE [LARGE SCALE MRNA]</scope>
    <source>
        <strain>AB</strain>
    </source>
</reference>